<evidence type="ECO:0000255" key="1"/>
<evidence type="ECO:0000255" key="2">
    <source>
        <dbReference type="HAMAP-Rule" id="MF_01895"/>
    </source>
</evidence>
<evidence type="ECO:0000256" key="3">
    <source>
        <dbReference type="SAM" id="MobiDB-lite"/>
    </source>
</evidence>
<proteinExistence type="inferred from homology"/>
<accession>Q9PK00</accession>
<organism>
    <name type="scientific">Chlamydia muridarum (strain MoPn / Nigg)</name>
    <dbReference type="NCBI Taxonomy" id="243161"/>
    <lineage>
        <taxon>Bacteria</taxon>
        <taxon>Pseudomonadati</taxon>
        <taxon>Chlamydiota</taxon>
        <taxon>Chlamydiia</taxon>
        <taxon>Chlamydiales</taxon>
        <taxon>Chlamydiaceae</taxon>
        <taxon>Chlamydia/Chlamydophila group</taxon>
        <taxon>Chlamydia</taxon>
    </lineage>
</organism>
<protein>
    <recommendedName>
        <fullName evidence="2">Ribonuclease R</fullName>
        <shortName evidence="2">RNase R</shortName>
        <ecNumber evidence="2">3.1.13.1</ecNumber>
    </recommendedName>
    <alternativeName>
        <fullName>VacB protein homolog</fullName>
    </alternativeName>
</protein>
<gene>
    <name evidence="2" type="primary">rnr</name>
    <name type="synonym">vacB</name>
    <name type="ordered locus">TC_0676</name>
</gene>
<name>RNR_CHLMU</name>
<comment type="function">
    <text evidence="2">3'-5' exoribonuclease that releases 5'-nucleoside monophosphates and is involved in maturation of structured RNAs.</text>
</comment>
<comment type="catalytic activity">
    <reaction evidence="2">
        <text>Exonucleolytic cleavage in the 3'- to 5'-direction to yield nucleoside 5'-phosphates.</text>
        <dbReference type="EC" id="3.1.13.1"/>
    </reaction>
</comment>
<comment type="subcellular location">
    <subcellularLocation>
        <location evidence="2">Cytoplasm</location>
    </subcellularLocation>
</comment>
<comment type="similarity">
    <text evidence="2">Belongs to the RNR ribonuclease family. RNase R subfamily.</text>
</comment>
<sequence>MGKAKNKKKVLKNKQQVLVPGILFVHPKKGFGFVSPDQPDLYPFDIFVPASDLKGALDGDHVLVALPFSQRGGEKRKGVIHKVLSRGKTVLVGTIISLISPTLAMVCVNAISPEVPLKAELLPKRTYKIGDRLLLKTPGWKENYPSKEPPPLAMLEFMGNISNAKTDFPVIKAEFSITEEFPEAVVQEASQFLQKHVTQALHSRKDLRDLLCFTIDSASAKDFDDAVSLTYDHEGNYILGVHIADVSHYVTPNSALDQEAAKRCNSIYFPGKVIPMLPSALSDNLCSLKPNVDRLAVSVFMTFSKEGFLSDYRILRSVIRSKYRMTYDEVDEIIEKKLAHPISKTILEMAELSRIFSDIREQRGCTRLVLPSFTMSLDNLQEPVALVENKQTAAHKLIEEFMLKANEVIAYHISHQGITMPFRIHEPPNEENLLLFRETAKAMGFTITQTPTQEPDYQYLLQETSAGHPLEPILHSQFVRSMKTASYSTENKGHYGLCLDYYTHFTSPIRRYVDLIVHRLLFHPLSVEEGHLEQIVRACSSQERVAAKAEGAFINIKKARFLKKFLDEQPATLYKAFIITVSPEGLSFVLPELCHEGFIPAAKLPKKYVIKTKLGLEELPEHLLPGIPISVQLASVTLLTQAIEWTLIESKERSSSKKKKAKAKSNATQVKKKSSSKKKKAVSKAKKNRGGK</sequence>
<dbReference type="EC" id="3.1.13.1" evidence="2"/>
<dbReference type="EMBL" id="AE002160">
    <property type="protein sequence ID" value="AAF73588.1"/>
    <property type="molecule type" value="Genomic_DNA"/>
</dbReference>
<dbReference type="RefSeq" id="WP_010231197.1">
    <property type="nucleotide sequence ID" value="NZ_CP063055.1"/>
</dbReference>
<dbReference type="SMR" id="Q9PK00"/>
<dbReference type="GeneID" id="1246037"/>
<dbReference type="KEGG" id="cmu:TC_0676"/>
<dbReference type="eggNOG" id="COG0557">
    <property type="taxonomic scope" value="Bacteria"/>
</dbReference>
<dbReference type="HOGENOM" id="CLU_002333_7_3_0"/>
<dbReference type="OrthoDB" id="9764149at2"/>
<dbReference type="Proteomes" id="UP000000800">
    <property type="component" value="Chromosome"/>
</dbReference>
<dbReference type="GO" id="GO:0005829">
    <property type="term" value="C:cytosol"/>
    <property type="evidence" value="ECO:0007669"/>
    <property type="project" value="TreeGrafter"/>
</dbReference>
<dbReference type="GO" id="GO:0008859">
    <property type="term" value="F:exoribonuclease II activity"/>
    <property type="evidence" value="ECO:0007669"/>
    <property type="project" value="UniProtKB-UniRule"/>
</dbReference>
<dbReference type="GO" id="GO:0003723">
    <property type="term" value="F:RNA binding"/>
    <property type="evidence" value="ECO:0007669"/>
    <property type="project" value="UniProtKB-UniRule"/>
</dbReference>
<dbReference type="GO" id="GO:0006402">
    <property type="term" value="P:mRNA catabolic process"/>
    <property type="evidence" value="ECO:0007669"/>
    <property type="project" value="TreeGrafter"/>
</dbReference>
<dbReference type="Gene3D" id="2.40.50.140">
    <property type="entry name" value="Nucleic acid-binding proteins"/>
    <property type="match status" value="1"/>
</dbReference>
<dbReference type="HAMAP" id="MF_01895">
    <property type="entry name" value="RNase_R"/>
    <property type="match status" value="1"/>
</dbReference>
<dbReference type="InterPro" id="IPR011129">
    <property type="entry name" value="CSD"/>
</dbReference>
<dbReference type="InterPro" id="IPR012340">
    <property type="entry name" value="NA-bd_OB-fold"/>
</dbReference>
<dbReference type="InterPro" id="IPR013223">
    <property type="entry name" value="RNase_B_OB_dom"/>
</dbReference>
<dbReference type="InterPro" id="IPR001900">
    <property type="entry name" value="RNase_II/R"/>
</dbReference>
<dbReference type="InterPro" id="IPR022966">
    <property type="entry name" value="RNase_II/R_CS"/>
</dbReference>
<dbReference type="InterPro" id="IPR004476">
    <property type="entry name" value="RNase_II/RNase_R"/>
</dbReference>
<dbReference type="InterPro" id="IPR011805">
    <property type="entry name" value="RNase_R"/>
</dbReference>
<dbReference type="InterPro" id="IPR050180">
    <property type="entry name" value="RNR_Ribonuclease"/>
</dbReference>
<dbReference type="NCBIfam" id="TIGR00358">
    <property type="entry name" value="3_prime_RNase"/>
    <property type="match status" value="1"/>
</dbReference>
<dbReference type="PANTHER" id="PTHR23355:SF9">
    <property type="entry name" value="DIS3-LIKE EXONUCLEASE 2"/>
    <property type="match status" value="1"/>
</dbReference>
<dbReference type="PANTHER" id="PTHR23355">
    <property type="entry name" value="RIBONUCLEASE"/>
    <property type="match status" value="1"/>
</dbReference>
<dbReference type="Pfam" id="PF08206">
    <property type="entry name" value="OB_RNB"/>
    <property type="match status" value="1"/>
</dbReference>
<dbReference type="Pfam" id="PF00773">
    <property type="entry name" value="RNB"/>
    <property type="match status" value="1"/>
</dbReference>
<dbReference type="SMART" id="SM00357">
    <property type="entry name" value="CSP"/>
    <property type="match status" value="1"/>
</dbReference>
<dbReference type="SMART" id="SM00955">
    <property type="entry name" value="RNB"/>
    <property type="match status" value="1"/>
</dbReference>
<dbReference type="SUPFAM" id="SSF50249">
    <property type="entry name" value="Nucleic acid-binding proteins"/>
    <property type="match status" value="2"/>
</dbReference>
<dbReference type="PROSITE" id="PS01175">
    <property type="entry name" value="RIBONUCLEASE_II"/>
    <property type="match status" value="1"/>
</dbReference>
<feature type="chain" id="PRO_0000166399" description="Ribonuclease R">
    <location>
        <begin position="1"/>
        <end position="692"/>
    </location>
</feature>
<feature type="domain" description="RNB" evidence="1">
    <location>
        <begin position="204"/>
        <end position="525"/>
    </location>
</feature>
<feature type="domain" description="S1 motif" evidence="2">
    <location>
        <begin position="563"/>
        <end position="648"/>
    </location>
</feature>
<feature type="region of interest" description="Disordered" evidence="3">
    <location>
        <begin position="651"/>
        <end position="692"/>
    </location>
</feature>
<feature type="compositionally biased region" description="Basic residues" evidence="3">
    <location>
        <begin position="670"/>
        <end position="692"/>
    </location>
</feature>
<keyword id="KW-0963">Cytoplasm</keyword>
<keyword id="KW-0269">Exonuclease</keyword>
<keyword id="KW-0378">Hydrolase</keyword>
<keyword id="KW-0540">Nuclease</keyword>
<keyword id="KW-0694">RNA-binding</keyword>
<reference key="1">
    <citation type="journal article" date="2000" name="Nucleic Acids Res.">
        <title>Genome sequences of Chlamydia trachomatis MoPn and Chlamydia pneumoniae AR39.</title>
        <authorList>
            <person name="Read T.D."/>
            <person name="Brunham R.C."/>
            <person name="Shen C."/>
            <person name="Gill S.R."/>
            <person name="Heidelberg J.F."/>
            <person name="White O."/>
            <person name="Hickey E.K."/>
            <person name="Peterson J.D."/>
            <person name="Utterback T.R."/>
            <person name="Berry K.J."/>
            <person name="Bass S."/>
            <person name="Linher K.D."/>
            <person name="Weidman J.F."/>
            <person name="Khouri H.M."/>
            <person name="Craven B."/>
            <person name="Bowman C."/>
            <person name="Dodson R.J."/>
            <person name="Gwinn M.L."/>
            <person name="Nelson W.C."/>
            <person name="DeBoy R.T."/>
            <person name="Kolonay J.F."/>
            <person name="McClarty G."/>
            <person name="Salzberg S.L."/>
            <person name="Eisen J.A."/>
            <person name="Fraser C.M."/>
        </authorList>
    </citation>
    <scope>NUCLEOTIDE SEQUENCE [LARGE SCALE GENOMIC DNA]</scope>
    <source>
        <strain>MoPn / Nigg</strain>
    </source>
</reference>